<dbReference type="EMBL" id="AY358528">
    <property type="protein sequence ID" value="AAQ88892.1"/>
    <property type="molecule type" value="mRNA"/>
</dbReference>
<dbReference type="EMBL" id="BC121812">
    <property type="protein sequence ID" value="AAI21813.1"/>
    <property type="molecule type" value="mRNA"/>
</dbReference>
<dbReference type="EMBL" id="BC121817">
    <property type="protein sequence ID" value="AAI21818.1"/>
    <property type="molecule type" value="mRNA"/>
</dbReference>
<dbReference type="CCDS" id="CCDS3542.1">
    <molecule id="Q6UX39-1"/>
</dbReference>
<dbReference type="CCDS" id="CCDS68716.1">
    <molecule id="Q6UX39-2"/>
</dbReference>
<dbReference type="RefSeq" id="NP_001273660.1">
    <molecule id="Q6UX39-2"/>
    <property type="nucleotide sequence ID" value="NM_001286731.2"/>
</dbReference>
<dbReference type="RefSeq" id="NP_997722.1">
    <molecule id="Q6UX39-1"/>
    <property type="nucleotide sequence ID" value="NM_212557.4"/>
</dbReference>
<dbReference type="BioGRID" id="134946">
    <property type="interactions" value="28"/>
</dbReference>
<dbReference type="FunCoup" id="Q6UX39">
    <property type="interactions" value="11"/>
</dbReference>
<dbReference type="IntAct" id="Q6UX39">
    <property type="interactions" value="26"/>
</dbReference>
<dbReference type="STRING" id="9606.ENSP00000341013"/>
<dbReference type="GlyGen" id="Q6UX39">
    <property type="glycosylation" value="1 site"/>
</dbReference>
<dbReference type="iPTMnet" id="Q6UX39"/>
<dbReference type="PhosphoSitePlus" id="Q6UX39"/>
<dbReference type="BioMuta" id="AMTN"/>
<dbReference type="DMDM" id="55976710"/>
<dbReference type="MassIVE" id="Q6UX39"/>
<dbReference type="PaxDb" id="9606-ENSP00000341013"/>
<dbReference type="Antibodypedia" id="50435">
    <property type="antibodies" value="195 antibodies from 22 providers"/>
</dbReference>
<dbReference type="DNASU" id="401138"/>
<dbReference type="Ensembl" id="ENST00000339336.9">
    <molecule id="Q6UX39-1"/>
    <property type="protein sequence ID" value="ENSP00000341013.4"/>
    <property type="gene ID" value="ENSG00000187689.10"/>
</dbReference>
<dbReference type="Ensembl" id="ENST00000504451.1">
    <molecule id="Q6UX39-2"/>
    <property type="protein sequence ID" value="ENSP00000422452.1"/>
    <property type="gene ID" value="ENSG00000187689.10"/>
</dbReference>
<dbReference type="GeneID" id="401138"/>
<dbReference type="KEGG" id="hsa:401138"/>
<dbReference type="MANE-Select" id="ENST00000339336.9">
    <property type="protein sequence ID" value="ENSP00000341013.4"/>
    <property type="RefSeq nucleotide sequence ID" value="NM_212557.4"/>
    <property type="RefSeq protein sequence ID" value="NP_997722.1"/>
</dbReference>
<dbReference type="UCSC" id="uc003hfk.3">
    <molecule id="Q6UX39-1"/>
    <property type="organism name" value="human"/>
</dbReference>
<dbReference type="AGR" id="HGNC:33188"/>
<dbReference type="CTD" id="401138"/>
<dbReference type="DisGeNET" id="401138"/>
<dbReference type="GeneCards" id="AMTN"/>
<dbReference type="HGNC" id="HGNC:33188">
    <property type="gene designation" value="AMTN"/>
</dbReference>
<dbReference type="HPA" id="ENSG00000187689">
    <property type="expression patterns" value="Tissue enhanced (lymphoid tissue, salivary gland, stomach)"/>
</dbReference>
<dbReference type="MalaCards" id="AMTN"/>
<dbReference type="MIM" id="610912">
    <property type="type" value="gene"/>
</dbReference>
<dbReference type="MIM" id="617607">
    <property type="type" value="phenotype"/>
</dbReference>
<dbReference type="neXtProt" id="NX_Q6UX39"/>
<dbReference type="OpenTargets" id="ENSG00000187689"/>
<dbReference type="Orphanet" id="100032">
    <property type="disease" value="Hypocalcified amelogenesis imperfecta"/>
</dbReference>
<dbReference type="PharmGKB" id="PA162376390"/>
<dbReference type="VEuPathDB" id="HostDB:ENSG00000187689"/>
<dbReference type="eggNOG" id="ENOG502SFV7">
    <property type="taxonomic scope" value="Eukaryota"/>
</dbReference>
<dbReference type="GeneTree" id="ENSGT00390000006715"/>
<dbReference type="HOGENOM" id="CLU_082745_0_0_1"/>
<dbReference type="InParanoid" id="Q6UX39"/>
<dbReference type="OMA" id="PQMLPIF"/>
<dbReference type="OrthoDB" id="9837242at2759"/>
<dbReference type="PAN-GO" id="Q6UX39">
    <property type="GO annotations" value="4 GO annotations based on evolutionary models"/>
</dbReference>
<dbReference type="PhylomeDB" id="Q6UX39"/>
<dbReference type="TreeFam" id="TF337677"/>
<dbReference type="PathwayCommons" id="Q6UX39"/>
<dbReference type="Reactome" id="R-HSA-381426">
    <property type="pathway name" value="Regulation of Insulin-like Growth Factor (IGF) transport and uptake by Insulin-like Growth Factor Binding Proteins (IGFBPs)"/>
</dbReference>
<dbReference type="Reactome" id="R-HSA-8957275">
    <property type="pathway name" value="Post-translational protein phosphorylation"/>
</dbReference>
<dbReference type="SignaLink" id="Q6UX39"/>
<dbReference type="BioGRID-ORCS" id="401138">
    <property type="hits" value="12 hits in 1149 CRISPR screens"/>
</dbReference>
<dbReference type="ChiTaRS" id="AMTN">
    <property type="organism name" value="human"/>
</dbReference>
<dbReference type="GenomeRNAi" id="401138"/>
<dbReference type="Pharos" id="Q6UX39">
    <property type="development level" value="Tbio"/>
</dbReference>
<dbReference type="PRO" id="PR:Q6UX39"/>
<dbReference type="Proteomes" id="UP000005640">
    <property type="component" value="Chromosome 4"/>
</dbReference>
<dbReference type="RNAct" id="Q6UX39">
    <property type="molecule type" value="protein"/>
</dbReference>
<dbReference type="Bgee" id="ENSG00000187689">
    <property type="expression patterns" value="Expressed in tonsil and 30 other cell types or tissues"/>
</dbReference>
<dbReference type="ExpressionAtlas" id="Q6UX39">
    <property type="expression patterns" value="baseline and differential"/>
</dbReference>
<dbReference type="GO" id="GO:0005604">
    <property type="term" value="C:basement membrane"/>
    <property type="evidence" value="ECO:0000250"/>
    <property type="project" value="HGNC-UCL"/>
</dbReference>
<dbReference type="GO" id="GO:0005911">
    <property type="term" value="C:cell-cell junction"/>
    <property type="evidence" value="ECO:0000250"/>
    <property type="project" value="HGNC-UCL"/>
</dbReference>
<dbReference type="GO" id="GO:0005788">
    <property type="term" value="C:endoplasmic reticulum lumen"/>
    <property type="evidence" value="ECO:0000304"/>
    <property type="project" value="Reactome"/>
</dbReference>
<dbReference type="GO" id="GO:0031012">
    <property type="term" value="C:extracellular matrix"/>
    <property type="evidence" value="ECO:0000250"/>
    <property type="project" value="HGNC-UCL"/>
</dbReference>
<dbReference type="GO" id="GO:0005576">
    <property type="term" value="C:extracellular region"/>
    <property type="evidence" value="ECO:0007669"/>
    <property type="project" value="UniProtKB-SubCell"/>
</dbReference>
<dbReference type="GO" id="GO:0031214">
    <property type="term" value="P:biomineral tissue development"/>
    <property type="evidence" value="ECO:0007669"/>
    <property type="project" value="UniProtKB-KW"/>
</dbReference>
<dbReference type="GO" id="GO:0007155">
    <property type="term" value="P:cell adhesion"/>
    <property type="evidence" value="ECO:0007669"/>
    <property type="project" value="UniProtKB-KW"/>
</dbReference>
<dbReference type="GO" id="GO:0042475">
    <property type="term" value="P:odontogenesis of dentin-containing tooth"/>
    <property type="evidence" value="ECO:0000250"/>
    <property type="project" value="HGNC-UCL"/>
</dbReference>
<dbReference type="GO" id="GO:0070169">
    <property type="term" value="P:positive regulation of biomineral tissue development"/>
    <property type="evidence" value="ECO:0000314"/>
    <property type="project" value="UniProtKB"/>
</dbReference>
<dbReference type="GO" id="GO:0070175">
    <property type="term" value="P:positive regulation of enamel mineralization"/>
    <property type="evidence" value="ECO:0000318"/>
    <property type="project" value="GO_Central"/>
</dbReference>
<dbReference type="InterPro" id="IPR031501">
    <property type="entry name" value="Amelotin"/>
</dbReference>
<dbReference type="PANTHER" id="PTHR36858">
    <property type="entry name" value="AMELOTIN"/>
    <property type="match status" value="1"/>
</dbReference>
<dbReference type="PANTHER" id="PTHR36858:SF1">
    <property type="entry name" value="AMELOTIN"/>
    <property type="match status" value="1"/>
</dbReference>
<dbReference type="Pfam" id="PF15757">
    <property type="entry name" value="Amelotin"/>
    <property type="match status" value="1"/>
</dbReference>
<evidence type="ECO:0000250" key="1">
    <source>
        <dbReference type="UniProtKB" id="Q3HS82"/>
    </source>
</evidence>
<evidence type="ECO:0000250" key="2">
    <source>
        <dbReference type="UniProtKB" id="Q9D3J8"/>
    </source>
</evidence>
<evidence type="ECO:0000256" key="3">
    <source>
        <dbReference type="SAM" id="MobiDB-lite"/>
    </source>
</evidence>
<evidence type="ECO:0000269" key="4">
    <source>
    </source>
</evidence>
<evidence type="ECO:0000269" key="5">
    <source>
    </source>
</evidence>
<evidence type="ECO:0000269" key="6">
    <source>
    </source>
</evidence>
<evidence type="ECO:0000269" key="7">
    <source>
    </source>
</evidence>
<evidence type="ECO:0000269" key="8">
    <source>
    </source>
</evidence>
<evidence type="ECO:0000303" key="9">
    <source>
    </source>
</evidence>
<evidence type="ECO:0000305" key="10"/>
<feature type="signal peptide" evidence="4">
    <location>
        <begin position="1"/>
        <end position="16"/>
    </location>
</feature>
<feature type="chain" id="PRO_0000022613" description="Amelotin">
    <location>
        <begin position="17"/>
        <end position="209"/>
    </location>
</feature>
<feature type="region of interest" description="Disordered" evidence="3">
    <location>
        <begin position="142"/>
        <end position="209"/>
    </location>
</feature>
<feature type="splice variant" id="VSP_023919" description="In isoform 2." evidence="9">
    <location>
        <position position="19"/>
    </location>
</feature>
<feature type="sequence variant" id="VAR_050661" description="In dbSNP:rs7660807.">
    <original>N</original>
    <variation>S</variation>
    <location>
        <position position="45"/>
    </location>
</feature>
<feature type="sequence variant" id="VAR_050662" description="In dbSNP:rs34803339.">
    <original>S</original>
    <variation>P</variation>
    <location>
        <position position="50"/>
    </location>
</feature>
<feature type="sequence variant" id="VAR_035791" description="In a colorectal cancer sample; somatic mutation; dbSNP:rs151041998." evidence="5">
    <original>G</original>
    <variation>S</variation>
    <location>
        <position position="78"/>
    </location>
</feature>
<reference key="1">
    <citation type="journal article" date="2003" name="Genome Res.">
        <title>The secreted protein discovery initiative (SPDI), a large-scale effort to identify novel human secreted and transmembrane proteins: a bioinformatics assessment.</title>
        <authorList>
            <person name="Clark H.F."/>
            <person name="Gurney A.L."/>
            <person name="Abaya E."/>
            <person name="Baker K."/>
            <person name="Baldwin D.T."/>
            <person name="Brush J."/>
            <person name="Chen J."/>
            <person name="Chow B."/>
            <person name="Chui C."/>
            <person name="Crowley C."/>
            <person name="Currell B."/>
            <person name="Deuel B."/>
            <person name="Dowd P."/>
            <person name="Eaton D."/>
            <person name="Foster J.S."/>
            <person name="Grimaldi C."/>
            <person name="Gu Q."/>
            <person name="Hass P.E."/>
            <person name="Heldens S."/>
            <person name="Huang A."/>
            <person name="Kim H.S."/>
            <person name="Klimowski L."/>
            <person name="Jin Y."/>
            <person name="Johnson S."/>
            <person name="Lee J."/>
            <person name="Lewis L."/>
            <person name="Liao D."/>
            <person name="Mark M.R."/>
            <person name="Robbie E."/>
            <person name="Sanchez C."/>
            <person name="Schoenfeld J."/>
            <person name="Seshagiri S."/>
            <person name="Simmons L."/>
            <person name="Singh J."/>
            <person name="Smith V."/>
            <person name="Stinson J."/>
            <person name="Vagts A."/>
            <person name="Vandlen R.L."/>
            <person name="Watanabe C."/>
            <person name="Wieand D."/>
            <person name="Woods K."/>
            <person name="Xie M.-H."/>
            <person name="Yansura D.G."/>
            <person name="Yi S."/>
            <person name="Yu G."/>
            <person name="Yuan J."/>
            <person name="Zhang M."/>
            <person name="Zhang Z."/>
            <person name="Goddard A.D."/>
            <person name="Wood W.I."/>
            <person name="Godowski P.J."/>
            <person name="Gray A.M."/>
        </authorList>
    </citation>
    <scope>NUCLEOTIDE SEQUENCE [LARGE SCALE MRNA] (ISOFORM 1)</scope>
</reference>
<reference key="2">
    <citation type="journal article" date="2004" name="Genome Res.">
        <title>The status, quality, and expansion of the NIH full-length cDNA project: the Mammalian Gene Collection (MGC).</title>
        <authorList>
            <consortium name="The MGC Project Team"/>
        </authorList>
    </citation>
    <scope>NUCLEOTIDE SEQUENCE [LARGE SCALE MRNA] (ISOFORMS 1 AND 2)</scope>
</reference>
<reference key="3">
    <citation type="journal article" date="2004" name="Protein Sci.">
        <title>Signal peptide prediction based on analysis of experimentally verified cleavage sites.</title>
        <authorList>
            <person name="Zhang Z."/>
            <person name="Henzel W.J."/>
        </authorList>
    </citation>
    <scope>PROTEIN SEQUENCE OF 17-31</scope>
</reference>
<reference key="4">
    <citation type="journal article" date="2015" name="J. Bone Miner. Res.">
        <title>The enamel protein amelotin is a promoter of hydroxyapatite mineralization.</title>
        <authorList>
            <person name="Abbarin N."/>
            <person name="Miguel S.S."/>
            <person name="Holcroft J."/>
            <person name="Iwasaki K."/>
            <person name="Ganss B."/>
        </authorList>
    </citation>
    <scope>FUNCTION</scope>
</reference>
<reference key="5">
    <citation type="journal article" date="2015" name="Elife">
        <title>A secretory kinase complex regulates extracellular protein phosphorylation.</title>
        <authorList>
            <person name="Cui J."/>
            <person name="Xiao J."/>
            <person name="Tagliabracci V.S."/>
            <person name="Wen J."/>
            <person name="Rahdar M."/>
            <person name="Dixon J.E."/>
        </authorList>
    </citation>
    <scope>PHOSPHORYLATION</scope>
</reference>
<reference key="6">
    <citation type="journal article" date="2016" name="Hum. Mol. Genet.">
        <title>Deletion of amelotin exons 3-6 is associated with amelogenesis imperfecta.</title>
        <authorList>
            <person name="Smith C.E."/>
            <person name="Murillo G."/>
            <person name="Brookes S.J."/>
            <person name="Poulter J.A."/>
            <person name="Silva S."/>
            <person name="Kirkham J."/>
            <person name="Inglehearn C.F."/>
            <person name="Mighell A.J."/>
        </authorList>
    </citation>
    <scope>INVOLVEMENT IN AI3B</scope>
</reference>
<reference key="7">
    <citation type="journal article" date="2006" name="Science">
        <title>The consensus coding sequences of human breast and colorectal cancers.</title>
        <authorList>
            <person name="Sjoeblom T."/>
            <person name="Jones S."/>
            <person name="Wood L.D."/>
            <person name="Parsons D.W."/>
            <person name="Lin J."/>
            <person name="Barber T.D."/>
            <person name="Mandelker D."/>
            <person name="Leary R.J."/>
            <person name="Ptak J."/>
            <person name="Silliman N."/>
            <person name="Szabo S."/>
            <person name="Buckhaults P."/>
            <person name="Farrell C."/>
            <person name="Meeh P."/>
            <person name="Markowitz S.D."/>
            <person name="Willis J."/>
            <person name="Dawson D."/>
            <person name="Willson J.K.V."/>
            <person name="Gazdar A.F."/>
            <person name="Hartigan J."/>
            <person name="Wu L."/>
            <person name="Liu C."/>
            <person name="Parmigiani G."/>
            <person name="Park B.H."/>
            <person name="Bachman K.E."/>
            <person name="Papadopoulos N."/>
            <person name="Vogelstein B."/>
            <person name="Kinzler K.W."/>
            <person name="Velculescu V.E."/>
        </authorList>
    </citation>
    <scope>VARIANT [LARGE SCALE ANALYSIS] SER-78</scope>
</reference>
<sequence length="209" mass="21588">MRSTILLFCLLGSTRSLPQLKPALGLPPTKLAPDQGTLPNQQQSNQVFPSLSLIPLTQMLTLGPDLHLLNPAAGMTPGTQTHPLTLGGLNVQQQLHPHVLPIFVTQLGAQGTILSSEELPQIFTSLIIHSLFPGGILPTSQAGANPDVQDGSLPAGGAGVNPATQGTPAGRLPTPSGTDDDFAVTTPAGIQRSTHAIEEATTESANGIQ</sequence>
<proteinExistence type="evidence at protein level"/>
<protein>
    <recommendedName>
        <fullName>Amelotin</fullName>
    </recommendedName>
</protein>
<keyword id="KW-0025">Alternative splicing</keyword>
<keyword id="KW-0986">Amelogenesis imperfecta</keyword>
<keyword id="KW-0091">Biomineralization</keyword>
<keyword id="KW-0130">Cell adhesion</keyword>
<keyword id="KW-0903">Direct protein sequencing</keyword>
<keyword id="KW-0325">Glycoprotein</keyword>
<keyword id="KW-1185">Reference proteome</keyword>
<keyword id="KW-0964">Secreted</keyword>
<keyword id="KW-0732">Signal</keyword>
<name>AMTN_HUMAN</name>
<accession>Q6UX39</accession>
<accession>Q0P503</accession>
<accession>Q0P506</accession>
<comment type="function">
    <text evidence="6">Is a promoter of calcium phosphate mineralization, playing a critical role in the formation of the compact, mineralized, aprismatic enamel surface layer during the maturation stage of amelogenesis.</text>
</comment>
<comment type="interaction">
    <interactant intactId="EBI-11892684">
        <id>Q6UX39</id>
    </interactant>
    <interactant intactId="EBI-10988864">
        <id>P46379-2</id>
        <label>BAG6</label>
    </interactant>
    <organismsDiffer>false</organismsDiffer>
    <experiments>3</experiments>
</comment>
<comment type="interaction">
    <interactant intactId="EBI-11892684">
        <id>Q6UX39</id>
    </interactant>
    <interactant intactId="EBI-7147442">
        <id>Q8IXL6</id>
        <label>FAM20C</label>
    </interactant>
    <organismsDiffer>false</organismsDiffer>
    <experiments>2</experiments>
</comment>
<comment type="subcellular location">
    <subcellularLocation>
        <location evidence="2">Secreted</location>
    </subcellularLocation>
</comment>
<comment type="alternative products">
    <event type="alternative splicing"/>
    <isoform>
        <id>Q6UX39-1</id>
        <name>1</name>
        <sequence type="displayed"/>
    </isoform>
    <isoform>
        <id>Q6UX39-2</id>
        <name>2</name>
        <sequence type="described" ref="VSP_023919"/>
    </isoform>
</comment>
<comment type="PTM">
    <text evidence="7">Phosphorylated by FAM20C in vitro.</text>
</comment>
<comment type="PTM">
    <text evidence="1">O-glycosylated.</text>
</comment>
<comment type="disease" evidence="8">
    <disease id="DI-05066">
        <name>Amelogenesis imperfecta 3B</name>
        <acronym>AI3B</acronym>
        <description>An autosomal dominant form of amelogenesis imperfecta, a defect of enamel formation. AI3B is characterized by hypomineralized enamel that has reduced tickness and exhibits structural defects.</description>
        <dbReference type="MIM" id="617607"/>
    </disease>
    <text>The disease is caused by variants affecting the gene represented in this entry.</text>
</comment>
<comment type="similarity">
    <text evidence="10">Belongs to the amelotin family.</text>
</comment>
<organism>
    <name type="scientific">Homo sapiens</name>
    <name type="common">Human</name>
    <dbReference type="NCBI Taxonomy" id="9606"/>
    <lineage>
        <taxon>Eukaryota</taxon>
        <taxon>Metazoa</taxon>
        <taxon>Chordata</taxon>
        <taxon>Craniata</taxon>
        <taxon>Vertebrata</taxon>
        <taxon>Euteleostomi</taxon>
        <taxon>Mammalia</taxon>
        <taxon>Eutheria</taxon>
        <taxon>Euarchontoglires</taxon>
        <taxon>Primates</taxon>
        <taxon>Haplorrhini</taxon>
        <taxon>Catarrhini</taxon>
        <taxon>Hominidae</taxon>
        <taxon>Homo</taxon>
    </lineage>
</organism>
<gene>
    <name type="primary">AMTN</name>
    <name type="ORF">UNQ689/PRO1329</name>
</gene>